<protein>
    <recommendedName>
        <fullName evidence="1">Ubiquinone biosynthesis O-methyltransferase</fullName>
    </recommendedName>
    <alternativeName>
        <fullName evidence="1">2-polyprenyl-6-hydroxyphenol methylase</fullName>
        <ecNumber evidence="1">2.1.1.222</ecNumber>
    </alternativeName>
    <alternativeName>
        <fullName evidence="1">3-demethylubiquinone 3-O-methyltransferase</fullName>
        <ecNumber evidence="1">2.1.1.64</ecNumber>
    </alternativeName>
</protein>
<name>UBIG_SACD2</name>
<keyword id="KW-0489">Methyltransferase</keyword>
<keyword id="KW-1185">Reference proteome</keyword>
<keyword id="KW-0949">S-adenosyl-L-methionine</keyword>
<keyword id="KW-0808">Transferase</keyword>
<keyword id="KW-0831">Ubiquinone biosynthesis</keyword>
<accession>Q21IR9</accession>
<proteinExistence type="inferred from homology"/>
<organism>
    <name type="scientific">Saccharophagus degradans (strain 2-40 / ATCC 43961 / DSM 17024)</name>
    <dbReference type="NCBI Taxonomy" id="203122"/>
    <lineage>
        <taxon>Bacteria</taxon>
        <taxon>Pseudomonadati</taxon>
        <taxon>Pseudomonadota</taxon>
        <taxon>Gammaproteobacteria</taxon>
        <taxon>Cellvibrionales</taxon>
        <taxon>Cellvibrionaceae</taxon>
        <taxon>Saccharophagus</taxon>
    </lineage>
</organism>
<feature type="chain" id="PRO_0000241733" description="Ubiquinone biosynthesis O-methyltransferase">
    <location>
        <begin position="1"/>
        <end position="236"/>
    </location>
</feature>
<feature type="binding site" evidence="1">
    <location>
        <position position="40"/>
    </location>
    <ligand>
        <name>S-adenosyl-L-methionine</name>
        <dbReference type="ChEBI" id="CHEBI:59789"/>
    </ligand>
</feature>
<feature type="binding site" evidence="1">
    <location>
        <position position="59"/>
    </location>
    <ligand>
        <name>S-adenosyl-L-methionine</name>
        <dbReference type="ChEBI" id="CHEBI:59789"/>
    </ligand>
</feature>
<feature type="binding site" evidence="1">
    <location>
        <position position="80"/>
    </location>
    <ligand>
        <name>S-adenosyl-L-methionine</name>
        <dbReference type="ChEBI" id="CHEBI:59789"/>
    </ligand>
</feature>
<feature type="binding site" evidence="1">
    <location>
        <position position="124"/>
    </location>
    <ligand>
        <name>S-adenosyl-L-methionine</name>
        <dbReference type="ChEBI" id="CHEBI:59789"/>
    </ligand>
</feature>
<comment type="function">
    <text evidence="1">O-methyltransferase that catalyzes the 2 O-methylation steps in the ubiquinone biosynthetic pathway.</text>
</comment>
<comment type="catalytic activity">
    <reaction evidence="1">
        <text>a 3-demethylubiquinol + S-adenosyl-L-methionine = a ubiquinol + S-adenosyl-L-homocysteine + H(+)</text>
        <dbReference type="Rhea" id="RHEA:44380"/>
        <dbReference type="Rhea" id="RHEA-COMP:9566"/>
        <dbReference type="Rhea" id="RHEA-COMP:10914"/>
        <dbReference type="ChEBI" id="CHEBI:15378"/>
        <dbReference type="ChEBI" id="CHEBI:17976"/>
        <dbReference type="ChEBI" id="CHEBI:57856"/>
        <dbReference type="ChEBI" id="CHEBI:59789"/>
        <dbReference type="ChEBI" id="CHEBI:84422"/>
        <dbReference type="EC" id="2.1.1.64"/>
    </reaction>
</comment>
<comment type="catalytic activity">
    <reaction evidence="1">
        <text>a 3-(all-trans-polyprenyl)benzene-1,2-diol + S-adenosyl-L-methionine = a 2-methoxy-6-(all-trans-polyprenyl)phenol + S-adenosyl-L-homocysteine + H(+)</text>
        <dbReference type="Rhea" id="RHEA:31411"/>
        <dbReference type="Rhea" id="RHEA-COMP:9550"/>
        <dbReference type="Rhea" id="RHEA-COMP:9551"/>
        <dbReference type="ChEBI" id="CHEBI:15378"/>
        <dbReference type="ChEBI" id="CHEBI:57856"/>
        <dbReference type="ChEBI" id="CHEBI:59789"/>
        <dbReference type="ChEBI" id="CHEBI:62729"/>
        <dbReference type="ChEBI" id="CHEBI:62731"/>
        <dbReference type="EC" id="2.1.1.222"/>
    </reaction>
</comment>
<comment type="pathway">
    <text evidence="1">Cofactor biosynthesis; ubiquinone biosynthesis.</text>
</comment>
<comment type="similarity">
    <text evidence="1">Belongs to the methyltransferase superfamily. UbiG/COQ3 family.</text>
</comment>
<gene>
    <name evidence="1" type="primary">ubiG</name>
    <name type="ordered locus">Sde_2150</name>
</gene>
<sequence>MTTQELNVDSAEIAKFERLAARWWDLEGEFKPLHDLNPLRANYIDERAQVAEKKLLDVGCGGGILCEAMAQRGAIVTGIDMGDAPLEVAKLHSLESGVNVDYIKTTAEEFAAKHPQSYDVVTCLEMLEHVPDPAQTIAACAQLVKPGGDIFFSTINRNPKAYLFAVVGAEYVLKMLPKGTHDYNKFIRPSELAQWMRNAGLELQEMCGMTYNPITKHYKLNAKDVSVNYIMHARKI</sequence>
<evidence type="ECO:0000255" key="1">
    <source>
        <dbReference type="HAMAP-Rule" id="MF_00472"/>
    </source>
</evidence>
<reference key="1">
    <citation type="journal article" date="2008" name="PLoS Genet.">
        <title>Complete genome sequence of the complex carbohydrate-degrading marine bacterium, Saccharophagus degradans strain 2-40 T.</title>
        <authorList>
            <person name="Weiner R.M."/>
            <person name="Taylor L.E. II"/>
            <person name="Henrissat B."/>
            <person name="Hauser L."/>
            <person name="Land M."/>
            <person name="Coutinho P.M."/>
            <person name="Rancurel C."/>
            <person name="Saunders E.H."/>
            <person name="Longmire A.G."/>
            <person name="Zhang H."/>
            <person name="Bayer E.A."/>
            <person name="Gilbert H.J."/>
            <person name="Larimer F."/>
            <person name="Zhulin I.B."/>
            <person name="Ekborg N.A."/>
            <person name="Lamed R."/>
            <person name="Richardson P.M."/>
            <person name="Borovok I."/>
            <person name="Hutcheson S."/>
        </authorList>
    </citation>
    <scope>NUCLEOTIDE SEQUENCE [LARGE SCALE GENOMIC DNA]</scope>
    <source>
        <strain>2-40 / ATCC 43961 / DSM 17024</strain>
    </source>
</reference>
<dbReference type="EC" id="2.1.1.222" evidence="1"/>
<dbReference type="EC" id="2.1.1.64" evidence="1"/>
<dbReference type="EMBL" id="CP000282">
    <property type="protein sequence ID" value="ABD81410.1"/>
    <property type="molecule type" value="Genomic_DNA"/>
</dbReference>
<dbReference type="RefSeq" id="WP_011468628.1">
    <property type="nucleotide sequence ID" value="NC_007912.1"/>
</dbReference>
<dbReference type="SMR" id="Q21IR9"/>
<dbReference type="STRING" id="203122.Sde_2150"/>
<dbReference type="GeneID" id="98613821"/>
<dbReference type="KEGG" id="sde:Sde_2150"/>
<dbReference type="eggNOG" id="COG2227">
    <property type="taxonomic scope" value="Bacteria"/>
</dbReference>
<dbReference type="HOGENOM" id="CLU_042432_5_0_6"/>
<dbReference type="OrthoDB" id="9801538at2"/>
<dbReference type="UniPathway" id="UPA00232"/>
<dbReference type="Proteomes" id="UP000001947">
    <property type="component" value="Chromosome"/>
</dbReference>
<dbReference type="GO" id="GO:0102208">
    <property type="term" value="F:2-polyprenyl-6-hydroxyphenol methylase activity"/>
    <property type="evidence" value="ECO:0007669"/>
    <property type="project" value="UniProtKB-EC"/>
</dbReference>
<dbReference type="GO" id="GO:0061542">
    <property type="term" value="F:3-demethylubiquinol 3-O-methyltransferase activity"/>
    <property type="evidence" value="ECO:0007669"/>
    <property type="project" value="UniProtKB-UniRule"/>
</dbReference>
<dbReference type="GO" id="GO:0010420">
    <property type="term" value="F:polyprenyldihydroxybenzoate methyltransferase activity"/>
    <property type="evidence" value="ECO:0007669"/>
    <property type="project" value="InterPro"/>
</dbReference>
<dbReference type="GO" id="GO:0032259">
    <property type="term" value="P:methylation"/>
    <property type="evidence" value="ECO:0007669"/>
    <property type="project" value="UniProtKB-KW"/>
</dbReference>
<dbReference type="CDD" id="cd02440">
    <property type="entry name" value="AdoMet_MTases"/>
    <property type="match status" value="1"/>
</dbReference>
<dbReference type="FunFam" id="3.40.50.150:FF:000028">
    <property type="entry name" value="Ubiquinone biosynthesis O-methyltransferase"/>
    <property type="match status" value="1"/>
</dbReference>
<dbReference type="Gene3D" id="3.40.50.150">
    <property type="entry name" value="Vaccinia Virus protein VP39"/>
    <property type="match status" value="1"/>
</dbReference>
<dbReference type="HAMAP" id="MF_00472">
    <property type="entry name" value="UbiG"/>
    <property type="match status" value="1"/>
</dbReference>
<dbReference type="InterPro" id="IPR029063">
    <property type="entry name" value="SAM-dependent_MTases_sf"/>
</dbReference>
<dbReference type="InterPro" id="IPR010233">
    <property type="entry name" value="UbiG_MeTrfase"/>
</dbReference>
<dbReference type="NCBIfam" id="TIGR01983">
    <property type="entry name" value="UbiG"/>
    <property type="match status" value="1"/>
</dbReference>
<dbReference type="PANTHER" id="PTHR43464">
    <property type="entry name" value="METHYLTRANSFERASE"/>
    <property type="match status" value="1"/>
</dbReference>
<dbReference type="PANTHER" id="PTHR43464:SF19">
    <property type="entry name" value="UBIQUINONE BIOSYNTHESIS O-METHYLTRANSFERASE, MITOCHONDRIAL"/>
    <property type="match status" value="1"/>
</dbReference>
<dbReference type="Pfam" id="PF13489">
    <property type="entry name" value="Methyltransf_23"/>
    <property type="match status" value="1"/>
</dbReference>
<dbReference type="SUPFAM" id="SSF53335">
    <property type="entry name" value="S-adenosyl-L-methionine-dependent methyltransferases"/>
    <property type="match status" value="1"/>
</dbReference>